<name>RL27_STAA9</name>
<comment type="PTM">
    <text evidence="1">The N-terminus is cleaved by ribosomal processing cysteine protease Prp.</text>
</comment>
<comment type="similarity">
    <text evidence="2">Belongs to the bacterial ribosomal protein bL27 family.</text>
</comment>
<sequence length="94" mass="10315">MLKLNLQFFASKKGVSSTKNGRDSESKRLGAKRADGQFVTGGSILYRQRGTKIYPGENVGRGGDDTLFAKIDGVVKFERKGRDKKQVSVYAVAE</sequence>
<reference key="1">
    <citation type="submission" date="2007-05" db="EMBL/GenBank/DDBJ databases">
        <title>Complete sequence of chromosome of Staphylococcus aureus subsp. aureus JH9.</title>
        <authorList>
            <consortium name="US DOE Joint Genome Institute"/>
            <person name="Copeland A."/>
            <person name="Lucas S."/>
            <person name="Lapidus A."/>
            <person name="Barry K."/>
            <person name="Detter J.C."/>
            <person name="Glavina del Rio T."/>
            <person name="Hammon N."/>
            <person name="Israni S."/>
            <person name="Pitluck S."/>
            <person name="Chain P."/>
            <person name="Malfatti S."/>
            <person name="Shin M."/>
            <person name="Vergez L."/>
            <person name="Schmutz J."/>
            <person name="Larimer F."/>
            <person name="Land M."/>
            <person name="Hauser L."/>
            <person name="Kyrpides N."/>
            <person name="Kim E."/>
            <person name="Tomasz A."/>
            <person name="Richardson P."/>
        </authorList>
    </citation>
    <scope>NUCLEOTIDE SEQUENCE [LARGE SCALE GENOMIC DNA]</scope>
    <source>
        <strain>JH9</strain>
    </source>
</reference>
<proteinExistence type="inferred from homology"/>
<accession>A5ITG9</accession>
<feature type="propeptide" id="PRO_0000459930" evidence="1">
    <location>
        <begin position="1"/>
        <end position="9"/>
    </location>
</feature>
<feature type="chain" id="PRO_1000081916" description="Large ribosomal subunit protein bL27">
    <location>
        <begin position="10"/>
        <end position="94"/>
    </location>
</feature>
<keyword id="KW-0687">Ribonucleoprotein</keyword>
<keyword id="KW-0689">Ribosomal protein</keyword>
<gene>
    <name evidence="2" type="primary">rpmA</name>
    <name type="ordered locus">SaurJH9_1702</name>
</gene>
<evidence type="ECO:0000250" key="1">
    <source>
        <dbReference type="UniProtKB" id="Q2FXT0"/>
    </source>
</evidence>
<evidence type="ECO:0000255" key="2">
    <source>
        <dbReference type="HAMAP-Rule" id="MF_00539"/>
    </source>
</evidence>
<evidence type="ECO:0000305" key="3"/>
<protein>
    <recommendedName>
        <fullName evidence="2">Large ribosomal subunit protein bL27</fullName>
    </recommendedName>
    <alternativeName>
        <fullName evidence="3">50S ribosomal protein L27</fullName>
    </alternativeName>
</protein>
<organism>
    <name type="scientific">Staphylococcus aureus (strain JH9)</name>
    <dbReference type="NCBI Taxonomy" id="359786"/>
    <lineage>
        <taxon>Bacteria</taxon>
        <taxon>Bacillati</taxon>
        <taxon>Bacillota</taxon>
        <taxon>Bacilli</taxon>
        <taxon>Bacillales</taxon>
        <taxon>Staphylococcaceae</taxon>
        <taxon>Staphylococcus</taxon>
    </lineage>
</organism>
<dbReference type="EMBL" id="CP000703">
    <property type="protein sequence ID" value="ABQ49492.1"/>
    <property type="molecule type" value="Genomic_DNA"/>
</dbReference>
<dbReference type="RefSeq" id="WP_000916187.1">
    <property type="nucleotide sequence ID" value="NC_009487.1"/>
</dbReference>
<dbReference type="SMR" id="A5ITG9"/>
<dbReference type="GeneID" id="98346013"/>
<dbReference type="KEGG" id="saj:SaurJH9_1702"/>
<dbReference type="HOGENOM" id="CLU_095424_4_0_9"/>
<dbReference type="GO" id="GO:0022625">
    <property type="term" value="C:cytosolic large ribosomal subunit"/>
    <property type="evidence" value="ECO:0007669"/>
    <property type="project" value="TreeGrafter"/>
</dbReference>
<dbReference type="GO" id="GO:0003735">
    <property type="term" value="F:structural constituent of ribosome"/>
    <property type="evidence" value="ECO:0007669"/>
    <property type="project" value="InterPro"/>
</dbReference>
<dbReference type="GO" id="GO:0006412">
    <property type="term" value="P:translation"/>
    <property type="evidence" value="ECO:0007669"/>
    <property type="project" value="UniProtKB-UniRule"/>
</dbReference>
<dbReference type="FunFam" id="2.40.50.100:FF:000004">
    <property type="entry name" value="50S ribosomal protein L27"/>
    <property type="match status" value="1"/>
</dbReference>
<dbReference type="Gene3D" id="2.40.50.100">
    <property type="match status" value="1"/>
</dbReference>
<dbReference type="HAMAP" id="MF_00539">
    <property type="entry name" value="Ribosomal_bL27"/>
    <property type="match status" value="1"/>
</dbReference>
<dbReference type="InterPro" id="IPR001684">
    <property type="entry name" value="Ribosomal_bL27"/>
</dbReference>
<dbReference type="InterPro" id="IPR018261">
    <property type="entry name" value="Ribosomal_bL27_CS"/>
</dbReference>
<dbReference type="NCBIfam" id="TIGR00062">
    <property type="entry name" value="L27"/>
    <property type="match status" value="1"/>
</dbReference>
<dbReference type="PANTHER" id="PTHR15893:SF0">
    <property type="entry name" value="LARGE RIBOSOMAL SUBUNIT PROTEIN BL27M"/>
    <property type="match status" value="1"/>
</dbReference>
<dbReference type="PANTHER" id="PTHR15893">
    <property type="entry name" value="RIBOSOMAL PROTEIN L27"/>
    <property type="match status" value="1"/>
</dbReference>
<dbReference type="Pfam" id="PF01016">
    <property type="entry name" value="Ribosomal_L27"/>
    <property type="match status" value="1"/>
</dbReference>
<dbReference type="PRINTS" id="PR00063">
    <property type="entry name" value="RIBOSOMALL27"/>
</dbReference>
<dbReference type="SUPFAM" id="SSF110324">
    <property type="entry name" value="Ribosomal L27 protein-like"/>
    <property type="match status" value="1"/>
</dbReference>
<dbReference type="PROSITE" id="PS00831">
    <property type="entry name" value="RIBOSOMAL_L27"/>
    <property type="match status" value="1"/>
</dbReference>